<keyword id="KW-0067">ATP-binding</keyword>
<keyword id="KW-0963">Cytoplasm</keyword>
<keyword id="KW-0227">DNA damage</keyword>
<keyword id="KW-0233">DNA recombination</keyword>
<keyword id="KW-0234">DNA repair</keyword>
<keyword id="KW-0238">DNA-binding</keyword>
<keyword id="KW-0378">Hydrolase</keyword>
<keyword id="KW-0547">Nucleotide-binding</keyword>
<sequence length="333" mass="37099">MDERLLSGESAYEDADLEYSLRPQTLRQYIGQDKAKHNLEVFIEAAKMREETLDHVLLYGPPGLGKTTLANIIANEMGVNIRTTSGPAIERPGDLAAVLTALQPGDVLFIDEIHRLHRSIEEVLYPAMEDFCLDIVIGKGPTARSVRLDLPPFTLVGATTRAGALSAPLRDRFGVLSRLEYYTVDQLSAIVERTAEVFEVEIDSLAALEIARRARGTPRIANRLLRRVRDFAQVRGDGTIAMEITQMALELLQVDKLGLDHIDHKFLLGIIEKFRGGPVGLETVSATIGEESHTIEDVYEPYLLQIGFLQRTPRGRIVTPLAYQHFGMEMPKI</sequence>
<name>RUVB_BACCN</name>
<organism>
    <name type="scientific">Bacillus cytotoxicus (strain DSM 22905 / CIP 110041 / 391-98 / NVH 391-98)</name>
    <dbReference type="NCBI Taxonomy" id="315749"/>
    <lineage>
        <taxon>Bacteria</taxon>
        <taxon>Bacillati</taxon>
        <taxon>Bacillota</taxon>
        <taxon>Bacilli</taxon>
        <taxon>Bacillales</taxon>
        <taxon>Bacillaceae</taxon>
        <taxon>Bacillus</taxon>
        <taxon>Bacillus cereus group</taxon>
    </lineage>
</organism>
<reference key="1">
    <citation type="journal article" date="2008" name="Chem. Biol. Interact.">
        <title>Extending the Bacillus cereus group genomics to putative food-borne pathogens of different toxicity.</title>
        <authorList>
            <person name="Lapidus A."/>
            <person name="Goltsman E."/>
            <person name="Auger S."/>
            <person name="Galleron N."/>
            <person name="Segurens B."/>
            <person name="Dossat C."/>
            <person name="Land M.L."/>
            <person name="Broussolle V."/>
            <person name="Brillard J."/>
            <person name="Guinebretiere M.-H."/>
            <person name="Sanchis V."/>
            <person name="Nguen-the C."/>
            <person name="Lereclus D."/>
            <person name="Richardson P."/>
            <person name="Wincker P."/>
            <person name="Weissenbach J."/>
            <person name="Ehrlich S.D."/>
            <person name="Sorokin A."/>
        </authorList>
    </citation>
    <scope>NUCLEOTIDE SEQUENCE [LARGE SCALE GENOMIC DNA]</scope>
    <source>
        <strain>DSM 22905 / CIP 110041 / 391-98 / NVH 391-98</strain>
    </source>
</reference>
<accession>A7GTA2</accession>
<proteinExistence type="inferred from homology"/>
<evidence type="ECO:0000255" key="1">
    <source>
        <dbReference type="HAMAP-Rule" id="MF_00016"/>
    </source>
</evidence>
<gene>
    <name evidence="1" type="primary">ruvB</name>
    <name type="ordered locus">Bcer98_3137</name>
</gene>
<protein>
    <recommendedName>
        <fullName evidence="1">Holliday junction branch migration complex subunit RuvB</fullName>
        <ecNumber evidence="1">3.6.4.-</ecNumber>
    </recommendedName>
</protein>
<dbReference type="EC" id="3.6.4.-" evidence="1"/>
<dbReference type="EMBL" id="CP000764">
    <property type="protein sequence ID" value="ABS23360.1"/>
    <property type="molecule type" value="Genomic_DNA"/>
</dbReference>
<dbReference type="RefSeq" id="WP_012095597.1">
    <property type="nucleotide sequence ID" value="NC_009674.1"/>
</dbReference>
<dbReference type="SMR" id="A7GTA2"/>
<dbReference type="STRING" id="315749.Bcer98_3137"/>
<dbReference type="GeneID" id="33898385"/>
<dbReference type="KEGG" id="bcy:Bcer98_3137"/>
<dbReference type="eggNOG" id="COG2255">
    <property type="taxonomic scope" value="Bacteria"/>
</dbReference>
<dbReference type="HOGENOM" id="CLU_055599_1_0_9"/>
<dbReference type="OrthoDB" id="9804478at2"/>
<dbReference type="Proteomes" id="UP000002300">
    <property type="component" value="Chromosome"/>
</dbReference>
<dbReference type="GO" id="GO:0005737">
    <property type="term" value="C:cytoplasm"/>
    <property type="evidence" value="ECO:0007669"/>
    <property type="project" value="UniProtKB-SubCell"/>
</dbReference>
<dbReference type="GO" id="GO:0048476">
    <property type="term" value="C:Holliday junction resolvase complex"/>
    <property type="evidence" value="ECO:0007669"/>
    <property type="project" value="UniProtKB-UniRule"/>
</dbReference>
<dbReference type="GO" id="GO:0005524">
    <property type="term" value="F:ATP binding"/>
    <property type="evidence" value="ECO:0007669"/>
    <property type="project" value="UniProtKB-UniRule"/>
</dbReference>
<dbReference type="GO" id="GO:0016887">
    <property type="term" value="F:ATP hydrolysis activity"/>
    <property type="evidence" value="ECO:0007669"/>
    <property type="project" value="InterPro"/>
</dbReference>
<dbReference type="GO" id="GO:0000400">
    <property type="term" value="F:four-way junction DNA binding"/>
    <property type="evidence" value="ECO:0007669"/>
    <property type="project" value="UniProtKB-UniRule"/>
</dbReference>
<dbReference type="GO" id="GO:0009378">
    <property type="term" value="F:four-way junction helicase activity"/>
    <property type="evidence" value="ECO:0007669"/>
    <property type="project" value="InterPro"/>
</dbReference>
<dbReference type="GO" id="GO:0006310">
    <property type="term" value="P:DNA recombination"/>
    <property type="evidence" value="ECO:0007669"/>
    <property type="project" value="UniProtKB-UniRule"/>
</dbReference>
<dbReference type="GO" id="GO:0006281">
    <property type="term" value="P:DNA repair"/>
    <property type="evidence" value="ECO:0007669"/>
    <property type="project" value="UniProtKB-UniRule"/>
</dbReference>
<dbReference type="CDD" id="cd00009">
    <property type="entry name" value="AAA"/>
    <property type="match status" value="1"/>
</dbReference>
<dbReference type="Gene3D" id="1.10.8.60">
    <property type="match status" value="1"/>
</dbReference>
<dbReference type="Gene3D" id="3.40.50.300">
    <property type="entry name" value="P-loop containing nucleotide triphosphate hydrolases"/>
    <property type="match status" value="1"/>
</dbReference>
<dbReference type="Gene3D" id="1.10.10.10">
    <property type="entry name" value="Winged helix-like DNA-binding domain superfamily/Winged helix DNA-binding domain"/>
    <property type="match status" value="1"/>
</dbReference>
<dbReference type="HAMAP" id="MF_00016">
    <property type="entry name" value="DNA_HJ_migration_RuvB"/>
    <property type="match status" value="1"/>
</dbReference>
<dbReference type="InterPro" id="IPR003593">
    <property type="entry name" value="AAA+_ATPase"/>
</dbReference>
<dbReference type="InterPro" id="IPR041445">
    <property type="entry name" value="AAA_lid_4"/>
</dbReference>
<dbReference type="InterPro" id="IPR004605">
    <property type="entry name" value="DNA_helicase_Holl-junc_RuvB"/>
</dbReference>
<dbReference type="InterPro" id="IPR027417">
    <property type="entry name" value="P-loop_NTPase"/>
</dbReference>
<dbReference type="InterPro" id="IPR008824">
    <property type="entry name" value="RuvB-like_N"/>
</dbReference>
<dbReference type="InterPro" id="IPR008823">
    <property type="entry name" value="RuvB_C"/>
</dbReference>
<dbReference type="InterPro" id="IPR036388">
    <property type="entry name" value="WH-like_DNA-bd_sf"/>
</dbReference>
<dbReference type="InterPro" id="IPR036390">
    <property type="entry name" value="WH_DNA-bd_sf"/>
</dbReference>
<dbReference type="NCBIfam" id="NF000868">
    <property type="entry name" value="PRK00080.1"/>
    <property type="match status" value="1"/>
</dbReference>
<dbReference type="NCBIfam" id="TIGR00635">
    <property type="entry name" value="ruvB"/>
    <property type="match status" value="1"/>
</dbReference>
<dbReference type="PANTHER" id="PTHR42848">
    <property type="match status" value="1"/>
</dbReference>
<dbReference type="PANTHER" id="PTHR42848:SF1">
    <property type="entry name" value="HOLLIDAY JUNCTION BRANCH MIGRATION COMPLEX SUBUNIT RUVB"/>
    <property type="match status" value="1"/>
</dbReference>
<dbReference type="Pfam" id="PF17864">
    <property type="entry name" value="AAA_lid_4"/>
    <property type="match status" value="1"/>
</dbReference>
<dbReference type="Pfam" id="PF05491">
    <property type="entry name" value="RuvB_C"/>
    <property type="match status" value="1"/>
</dbReference>
<dbReference type="Pfam" id="PF05496">
    <property type="entry name" value="RuvB_N"/>
    <property type="match status" value="1"/>
</dbReference>
<dbReference type="SMART" id="SM00382">
    <property type="entry name" value="AAA"/>
    <property type="match status" value="1"/>
</dbReference>
<dbReference type="SUPFAM" id="SSF52540">
    <property type="entry name" value="P-loop containing nucleoside triphosphate hydrolases"/>
    <property type="match status" value="1"/>
</dbReference>
<dbReference type="SUPFAM" id="SSF46785">
    <property type="entry name" value="Winged helix' DNA-binding domain"/>
    <property type="match status" value="1"/>
</dbReference>
<comment type="function">
    <text evidence="1">The RuvA-RuvB-RuvC complex processes Holliday junction (HJ) DNA during genetic recombination and DNA repair, while the RuvA-RuvB complex plays an important role in the rescue of blocked DNA replication forks via replication fork reversal (RFR). RuvA specifically binds to HJ cruciform DNA, conferring on it an open structure. The RuvB hexamer acts as an ATP-dependent pump, pulling dsDNA into and through the RuvAB complex. RuvB forms 2 homohexamers on either side of HJ DNA bound by 1 or 2 RuvA tetramers; 4 subunits per hexamer contact DNA at a time. Coordinated motions by a converter formed by DNA-disengaged RuvB subunits stimulates ATP hydrolysis and nucleotide exchange. Immobilization of the converter enables RuvB to convert the ATP-contained energy into a lever motion, pulling 2 nucleotides of DNA out of the RuvA tetramer per ATP hydrolyzed, thus driving DNA branch migration. The RuvB motors rotate together with the DNA substrate, which together with the progressing nucleotide cycle form the mechanistic basis for DNA recombination by continuous HJ branch migration. Branch migration allows RuvC to scan DNA until it finds its consensus sequence, where it cleaves and resolves cruciform DNA.</text>
</comment>
<comment type="catalytic activity">
    <reaction evidence="1">
        <text>ATP + H2O = ADP + phosphate + H(+)</text>
        <dbReference type="Rhea" id="RHEA:13065"/>
        <dbReference type="ChEBI" id="CHEBI:15377"/>
        <dbReference type="ChEBI" id="CHEBI:15378"/>
        <dbReference type="ChEBI" id="CHEBI:30616"/>
        <dbReference type="ChEBI" id="CHEBI:43474"/>
        <dbReference type="ChEBI" id="CHEBI:456216"/>
    </reaction>
</comment>
<comment type="subunit">
    <text evidence="1">Homohexamer. Forms an RuvA(8)-RuvB(12)-Holliday junction (HJ) complex. HJ DNA is sandwiched between 2 RuvA tetramers; dsDNA enters through RuvA and exits via RuvB. An RuvB hexamer assembles on each DNA strand where it exits the tetramer. Each RuvB hexamer is contacted by two RuvA subunits (via domain III) on 2 adjacent RuvB subunits; this complex drives branch migration. In the full resolvosome a probable DNA-RuvA(4)-RuvB(12)-RuvC(2) complex forms which resolves the HJ.</text>
</comment>
<comment type="subcellular location">
    <subcellularLocation>
        <location evidence="1">Cytoplasm</location>
    </subcellularLocation>
</comment>
<comment type="domain">
    <text evidence="1">Has 3 domains, the large (RuvB-L) and small ATPase (RuvB-S) domains and the C-terminal head (RuvB-H) domain. The head domain binds DNA, while the ATPase domains jointly bind ATP, ADP or are empty depending on the state of the subunit in the translocation cycle. During a single DNA translocation step the structure of each domain remains the same, but their relative positions change.</text>
</comment>
<comment type="similarity">
    <text evidence="1">Belongs to the RuvB family.</text>
</comment>
<feature type="chain" id="PRO_1000074071" description="Holliday junction branch migration complex subunit RuvB">
    <location>
        <begin position="1"/>
        <end position="333"/>
    </location>
</feature>
<feature type="region of interest" description="Large ATPase domain (RuvB-L)" evidence="1">
    <location>
        <begin position="1"/>
        <end position="182"/>
    </location>
</feature>
<feature type="region of interest" description="Small ATPAse domain (RuvB-S)" evidence="1">
    <location>
        <begin position="183"/>
        <end position="253"/>
    </location>
</feature>
<feature type="region of interest" description="Head domain (RuvB-H)" evidence="1">
    <location>
        <begin position="256"/>
        <end position="333"/>
    </location>
</feature>
<feature type="binding site" evidence="1">
    <location>
        <position position="21"/>
    </location>
    <ligand>
        <name>ATP</name>
        <dbReference type="ChEBI" id="CHEBI:30616"/>
    </ligand>
</feature>
<feature type="binding site" evidence="1">
    <location>
        <position position="22"/>
    </location>
    <ligand>
        <name>ATP</name>
        <dbReference type="ChEBI" id="CHEBI:30616"/>
    </ligand>
</feature>
<feature type="binding site" evidence="1">
    <location>
        <position position="63"/>
    </location>
    <ligand>
        <name>ATP</name>
        <dbReference type="ChEBI" id="CHEBI:30616"/>
    </ligand>
</feature>
<feature type="binding site" evidence="1">
    <location>
        <position position="66"/>
    </location>
    <ligand>
        <name>ATP</name>
        <dbReference type="ChEBI" id="CHEBI:30616"/>
    </ligand>
</feature>
<feature type="binding site" evidence="1">
    <location>
        <position position="67"/>
    </location>
    <ligand>
        <name>ATP</name>
        <dbReference type="ChEBI" id="CHEBI:30616"/>
    </ligand>
</feature>
<feature type="binding site" evidence="1">
    <location>
        <position position="67"/>
    </location>
    <ligand>
        <name>Mg(2+)</name>
        <dbReference type="ChEBI" id="CHEBI:18420"/>
    </ligand>
</feature>
<feature type="binding site" evidence="1">
    <location>
        <position position="68"/>
    </location>
    <ligand>
        <name>ATP</name>
        <dbReference type="ChEBI" id="CHEBI:30616"/>
    </ligand>
</feature>
<feature type="binding site" evidence="1">
    <location>
        <begin position="129"/>
        <end position="131"/>
    </location>
    <ligand>
        <name>ATP</name>
        <dbReference type="ChEBI" id="CHEBI:30616"/>
    </ligand>
</feature>
<feature type="binding site" evidence="1">
    <location>
        <position position="172"/>
    </location>
    <ligand>
        <name>ATP</name>
        <dbReference type="ChEBI" id="CHEBI:30616"/>
    </ligand>
</feature>
<feature type="binding site" evidence="1">
    <location>
        <position position="182"/>
    </location>
    <ligand>
        <name>ATP</name>
        <dbReference type="ChEBI" id="CHEBI:30616"/>
    </ligand>
</feature>
<feature type="binding site" evidence="1">
    <location>
        <position position="219"/>
    </location>
    <ligand>
        <name>ATP</name>
        <dbReference type="ChEBI" id="CHEBI:30616"/>
    </ligand>
</feature>
<feature type="binding site" evidence="1">
    <location>
        <position position="311"/>
    </location>
    <ligand>
        <name>DNA</name>
        <dbReference type="ChEBI" id="CHEBI:16991"/>
    </ligand>
</feature>
<feature type="binding site" evidence="1">
    <location>
        <position position="316"/>
    </location>
    <ligand>
        <name>DNA</name>
        <dbReference type="ChEBI" id="CHEBI:16991"/>
    </ligand>
</feature>